<protein>
    <recommendedName>
        <fullName evidence="1">GTPase Der</fullName>
    </recommendedName>
    <alternativeName>
        <fullName evidence="1">GTP-binding protein EngA</fullName>
    </alternativeName>
</protein>
<organism>
    <name type="scientific">Chloroflexus aurantiacus (strain ATCC 29366 / DSM 635 / J-10-fl)</name>
    <dbReference type="NCBI Taxonomy" id="324602"/>
    <lineage>
        <taxon>Bacteria</taxon>
        <taxon>Bacillati</taxon>
        <taxon>Chloroflexota</taxon>
        <taxon>Chloroflexia</taxon>
        <taxon>Chloroflexales</taxon>
        <taxon>Chloroflexineae</taxon>
        <taxon>Chloroflexaceae</taxon>
        <taxon>Chloroflexus</taxon>
    </lineage>
</organism>
<dbReference type="EMBL" id="CP000909">
    <property type="protein sequence ID" value="ABY36305.1"/>
    <property type="molecule type" value="Genomic_DNA"/>
</dbReference>
<dbReference type="RefSeq" id="WP_012258958.1">
    <property type="nucleotide sequence ID" value="NC_010175.1"/>
</dbReference>
<dbReference type="RefSeq" id="YP_001636694.1">
    <property type="nucleotide sequence ID" value="NC_010175.1"/>
</dbReference>
<dbReference type="SMR" id="A9WHH9"/>
<dbReference type="FunCoup" id="A9WHH9">
    <property type="interactions" value="399"/>
</dbReference>
<dbReference type="STRING" id="324602.Caur_3106"/>
<dbReference type="EnsemblBacteria" id="ABY36305">
    <property type="protein sequence ID" value="ABY36305"/>
    <property type="gene ID" value="Caur_3106"/>
</dbReference>
<dbReference type="KEGG" id="cau:Caur_3106"/>
<dbReference type="PATRIC" id="fig|324602.8.peg.3510"/>
<dbReference type="eggNOG" id="COG1160">
    <property type="taxonomic scope" value="Bacteria"/>
</dbReference>
<dbReference type="HOGENOM" id="CLU_016077_6_2_0"/>
<dbReference type="InParanoid" id="A9WHH9"/>
<dbReference type="Proteomes" id="UP000002008">
    <property type="component" value="Chromosome"/>
</dbReference>
<dbReference type="GO" id="GO:0016887">
    <property type="term" value="F:ATP hydrolysis activity"/>
    <property type="evidence" value="ECO:0007669"/>
    <property type="project" value="InterPro"/>
</dbReference>
<dbReference type="GO" id="GO:0005525">
    <property type="term" value="F:GTP binding"/>
    <property type="evidence" value="ECO:0007669"/>
    <property type="project" value="UniProtKB-UniRule"/>
</dbReference>
<dbReference type="GO" id="GO:0043022">
    <property type="term" value="F:ribosome binding"/>
    <property type="evidence" value="ECO:0000318"/>
    <property type="project" value="GO_Central"/>
</dbReference>
<dbReference type="GO" id="GO:0042254">
    <property type="term" value="P:ribosome biogenesis"/>
    <property type="evidence" value="ECO:0007669"/>
    <property type="project" value="UniProtKB-KW"/>
</dbReference>
<dbReference type="CDD" id="cd01894">
    <property type="entry name" value="EngA1"/>
    <property type="match status" value="1"/>
</dbReference>
<dbReference type="CDD" id="cd01895">
    <property type="entry name" value="EngA2"/>
    <property type="match status" value="1"/>
</dbReference>
<dbReference type="FunFam" id="3.30.300.20:FF:000004">
    <property type="entry name" value="GTPase Der"/>
    <property type="match status" value="1"/>
</dbReference>
<dbReference type="FunFam" id="3.40.50.300:FF:000040">
    <property type="entry name" value="GTPase Der"/>
    <property type="match status" value="1"/>
</dbReference>
<dbReference type="FunFam" id="3.40.50.300:FF:000057">
    <property type="entry name" value="GTPase Der"/>
    <property type="match status" value="1"/>
</dbReference>
<dbReference type="Gene3D" id="3.30.300.20">
    <property type="match status" value="1"/>
</dbReference>
<dbReference type="Gene3D" id="3.40.50.300">
    <property type="entry name" value="P-loop containing nucleotide triphosphate hydrolases"/>
    <property type="match status" value="2"/>
</dbReference>
<dbReference type="HAMAP" id="MF_00195">
    <property type="entry name" value="GTPase_Der"/>
    <property type="match status" value="1"/>
</dbReference>
<dbReference type="InterPro" id="IPR003593">
    <property type="entry name" value="AAA+_ATPase"/>
</dbReference>
<dbReference type="InterPro" id="IPR031166">
    <property type="entry name" value="G_ENGA"/>
</dbReference>
<dbReference type="InterPro" id="IPR006073">
    <property type="entry name" value="GTP-bd"/>
</dbReference>
<dbReference type="InterPro" id="IPR016484">
    <property type="entry name" value="GTPase_Der"/>
</dbReference>
<dbReference type="InterPro" id="IPR032859">
    <property type="entry name" value="KH_dom-like"/>
</dbReference>
<dbReference type="InterPro" id="IPR015946">
    <property type="entry name" value="KH_dom-like_a/b"/>
</dbReference>
<dbReference type="InterPro" id="IPR027417">
    <property type="entry name" value="P-loop_NTPase"/>
</dbReference>
<dbReference type="InterPro" id="IPR005225">
    <property type="entry name" value="Small_GTP-bd"/>
</dbReference>
<dbReference type="NCBIfam" id="TIGR03594">
    <property type="entry name" value="GTPase_EngA"/>
    <property type="match status" value="1"/>
</dbReference>
<dbReference type="NCBIfam" id="TIGR00231">
    <property type="entry name" value="small_GTP"/>
    <property type="match status" value="2"/>
</dbReference>
<dbReference type="PANTHER" id="PTHR43834">
    <property type="entry name" value="GTPASE DER"/>
    <property type="match status" value="1"/>
</dbReference>
<dbReference type="PANTHER" id="PTHR43834:SF6">
    <property type="entry name" value="GTPASE DER"/>
    <property type="match status" value="1"/>
</dbReference>
<dbReference type="Pfam" id="PF14714">
    <property type="entry name" value="KH_dom-like"/>
    <property type="match status" value="1"/>
</dbReference>
<dbReference type="Pfam" id="PF01926">
    <property type="entry name" value="MMR_HSR1"/>
    <property type="match status" value="2"/>
</dbReference>
<dbReference type="PIRSF" id="PIRSF006485">
    <property type="entry name" value="GTP-binding_EngA"/>
    <property type="match status" value="1"/>
</dbReference>
<dbReference type="PRINTS" id="PR00326">
    <property type="entry name" value="GTP1OBG"/>
</dbReference>
<dbReference type="SMART" id="SM00382">
    <property type="entry name" value="AAA"/>
    <property type="match status" value="2"/>
</dbReference>
<dbReference type="SUPFAM" id="SSF52540">
    <property type="entry name" value="P-loop containing nucleoside triphosphate hydrolases"/>
    <property type="match status" value="2"/>
</dbReference>
<dbReference type="PROSITE" id="PS51712">
    <property type="entry name" value="G_ENGA"/>
    <property type="match status" value="2"/>
</dbReference>
<gene>
    <name evidence="1" type="primary">der</name>
    <name type="synonym">engA</name>
    <name type="ordered locus">Caur_3106</name>
</gene>
<feature type="chain" id="PRO_1000077651" description="GTPase Der">
    <location>
        <begin position="1"/>
        <end position="449"/>
    </location>
</feature>
<feature type="domain" description="EngA-type G 1">
    <location>
        <begin position="4"/>
        <end position="174"/>
    </location>
</feature>
<feature type="domain" description="EngA-type G 2">
    <location>
        <begin position="183"/>
        <end position="358"/>
    </location>
</feature>
<feature type="domain" description="KH-like" evidence="1">
    <location>
        <begin position="359"/>
        <end position="444"/>
    </location>
</feature>
<feature type="binding site" evidence="1">
    <location>
        <begin position="10"/>
        <end position="17"/>
    </location>
    <ligand>
        <name>GTP</name>
        <dbReference type="ChEBI" id="CHEBI:37565"/>
        <label>1</label>
    </ligand>
</feature>
<feature type="binding site" evidence="1">
    <location>
        <begin position="57"/>
        <end position="61"/>
    </location>
    <ligand>
        <name>GTP</name>
        <dbReference type="ChEBI" id="CHEBI:37565"/>
        <label>1</label>
    </ligand>
</feature>
<feature type="binding site" evidence="1">
    <location>
        <begin position="126"/>
        <end position="129"/>
    </location>
    <ligand>
        <name>GTP</name>
        <dbReference type="ChEBI" id="CHEBI:37565"/>
        <label>1</label>
    </ligand>
</feature>
<feature type="binding site" evidence="1">
    <location>
        <begin position="189"/>
        <end position="196"/>
    </location>
    <ligand>
        <name>GTP</name>
        <dbReference type="ChEBI" id="CHEBI:37565"/>
        <label>2</label>
    </ligand>
</feature>
<feature type="binding site" evidence="1">
    <location>
        <begin position="236"/>
        <end position="240"/>
    </location>
    <ligand>
        <name>GTP</name>
        <dbReference type="ChEBI" id="CHEBI:37565"/>
        <label>2</label>
    </ligand>
</feature>
<feature type="binding site" evidence="1">
    <location>
        <begin position="301"/>
        <end position="304"/>
    </location>
    <ligand>
        <name>GTP</name>
        <dbReference type="ChEBI" id="CHEBI:37565"/>
        <label>2</label>
    </ligand>
</feature>
<keyword id="KW-0342">GTP-binding</keyword>
<keyword id="KW-0547">Nucleotide-binding</keyword>
<keyword id="KW-1185">Reference proteome</keyword>
<keyword id="KW-0677">Repeat</keyword>
<keyword id="KW-0690">Ribosome biogenesis</keyword>
<sequence>MTKPIVAIVGRPNVGKSTFFNRLIGERRAIVEDLPGTTRDRLYGDTFWNGREFTVVDTAGVLFGGEDPNLPEAEIARRTRAQAEHAIAEADAIIFIVDGRDGLTAADSDVADVLRTTSKPVVLAVNKCDSQERMLDAVEFYALNLGEPIPMSAFHGLGTGDVLDRLTEYLPPKTFTQEEERHLRIAIVGRPNVGKSSLLNRLLGQERSVVSSIPGTTRDPIDTTITYHGEPITLIDTAGIRRAGKIERGIEKYSVLRTLRAIERCDVALLLIDATEGVTAQDTHIAGMVVEAKKGLILVVNKWDAIEKDSHTYYAFQDQVREAFKFVDYAPIVFVSALTGQRVSHLLDYAREVYVQRQKRVPTSELNNFLREVMLQQPPMAVKKGAHLRLYYAVQPQTEPPVFLFFANDGELVHWSYARYLENRLRERYGFQGTPIVIVFRSRERKEER</sequence>
<reference key="1">
    <citation type="journal article" date="2011" name="BMC Genomics">
        <title>Complete genome sequence of the filamentous anoxygenic phototrophic bacterium Chloroflexus aurantiacus.</title>
        <authorList>
            <person name="Tang K.H."/>
            <person name="Barry K."/>
            <person name="Chertkov O."/>
            <person name="Dalin E."/>
            <person name="Han C.S."/>
            <person name="Hauser L.J."/>
            <person name="Honchak B.M."/>
            <person name="Karbach L.E."/>
            <person name="Land M.L."/>
            <person name="Lapidus A."/>
            <person name="Larimer F.W."/>
            <person name="Mikhailova N."/>
            <person name="Pitluck S."/>
            <person name="Pierson B.K."/>
            <person name="Blankenship R.E."/>
        </authorList>
    </citation>
    <scope>NUCLEOTIDE SEQUENCE [LARGE SCALE GENOMIC DNA]</scope>
    <source>
        <strain>ATCC 29366 / DSM 635 / J-10-fl</strain>
    </source>
</reference>
<evidence type="ECO:0000255" key="1">
    <source>
        <dbReference type="HAMAP-Rule" id="MF_00195"/>
    </source>
</evidence>
<accession>A9WHH9</accession>
<name>DER_CHLAA</name>
<proteinExistence type="inferred from homology"/>
<comment type="function">
    <text evidence="1">GTPase that plays an essential role in the late steps of ribosome biogenesis.</text>
</comment>
<comment type="subunit">
    <text evidence="1">Associates with the 50S ribosomal subunit.</text>
</comment>
<comment type="similarity">
    <text evidence="1">Belongs to the TRAFAC class TrmE-Era-EngA-EngB-Septin-like GTPase superfamily. EngA (Der) GTPase family.</text>
</comment>